<reference key="1">
    <citation type="journal article" date="1988" name="J. Biol. Chem.">
        <title>Structure and expression of the genes encoding the alpha and beta subunits of yeast phenylalanyl-tRNA synthetase.</title>
        <authorList>
            <person name="Sanni A."/>
            <person name="Mirande M."/>
            <person name="Ebel J.-P."/>
            <person name="Boulanger Y."/>
            <person name="Waller J.-P."/>
            <person name="Fasiolo F."/>
        </authorList>
    </citation>
    <scope>NUCLEOTIDE SEQUENCE [GENOMIC DNA]</scope>
    <scope>PARTIAL PROTEIN SEQUENCE</scope>
</reference>
<reference key="2">
    <citation type="journal article" date="1997" name="Nature">
        <title>The nucleotide sequence of Saccharomyces cerevisiae chromosome XII.</title>
        <authorList>
            <person name="Johnston M."/>
            <person name="Hillier L.W."/>
            <person name="Riles L."/>
            <person name="Albermann K."/>
            <person name="Andre B."/>
            <person name="Ansorge W."/>
            <person name="Benes V."/>
            <person name="Brueckner M."/>
            <person name="Delius H."/>
            <person name="Dubois E."/>
            <person name="Duesterhoeft A."/>
            <person name="Entian K.-D."/>
            <person name="Floeth M."/>
            <person name="Goffeau A."/>
            <person name="Hebling U."/>
            <person name="Heumann K."/>
            <person name="Heuss-Neitzel D."/>
            <person name="Hilbert H."/>
            <person name="Hilger F."/>
            <person name="Kleine K."/>
            <person name="Koetter P."/>
            <person name="Louis E.J."/>
            <person name="Messenguy F."/>
            <person name="Mewes H.-W."/>
            <person name="Miosga T."/>
            <person name="Moestl D."/>
            <person name="Mueller-Auer S."/>
            <person name="Nentwich U."/>
            <person name="Obermaier B."/>
            <person name="Piravandi E."/>
            <person name="Pohl T.M."/>
            <person name="Portetelle D."/>
            <person name="Purnelle B."/>
            <person name="Rechmann S."/>
            <person name="Rieger M."/>
            <person name="Rinke M."/>
            <person name="Rose M."/>
            <person name="Scharfe M."/>
            <person name="Scherens B."/>
            <person name="Scholler P."/>
            <person name="Schwager C."/>
            <person name="Schwarz S."/>
            <person name="Underwood A.P."/>
            <person name="Urrestarazu L.A."/>
            <person name="Vandenbol M."/>
            <person name="Verhasselt P."/>
            <person name="Vierendeels F."/>
            <person name="Voet M."/>
            <person name="Volckaert G."/>
            <person name="Voss H."/>
            <person name="Wambutt R."/>
            <person name="Wedler E."/>
            <person name="Wedler H."/>
            <person name="Zimmermann F.K."/>
            <person name="Zollner A."/>
            <person name="Hani J."/>
            <person name="Hoheisel J.D."/>
        </authorList>
    </citation>
    <scope>NUCLEOTIDE SEQUENCE [LARGE SCALE GENOMIC DNA]</scope>
    <source>
        <strain>ATCC 204508 / S288c</strain>
    </source>
</reference>
<reference key="3">
    <citation type="journal article" date="2014" name="G3 (Bethesda)">
        <title>The reference genome sequence of Saccharomyces cerevisiae: Then and now.</title>
        <authorList>
            <person name="Engel S.R."/>
            <person name="Dietrich F.S."/>
            <person name="Fisk D.G."/>
            <person name="Binkley G."/>
            <person name="Balakrishnan R."/>
            <person name="Costanzo M.C."/>
            <person name="Dwight S.S."/>
            <person name="Hitz B.C."/>
            <person name="Karra K."/>
            <person name="Nash R.S."/>
            <person name="Weng S."/>
            <person name="Wong E.D."/>
            <person name="Lloyd P."/>
            <person name="Skrzypek M.S."/>
            <person name="Miyasato S.R."/>
            <person name="Simison M."/>
            <person name="Cherry J.M."/>
        </authorList>
    </citation>
    <scope>GENOME REANNOTATION</scope>
    <source>
        <strain>ATCC 204508 / S288c</strain>
    </source>
</reference>
<reference key="4">
    <citation type="journal article" date="2007" name="Genome Res.">
        <title>Approaching a complete repository of sequence-verified protein-encoding clones for Saccharomyces cerevisiae.</title>
        <authorList>
            <person name="Hu Y."/>
            <person name="Rolfs A."/>
            <person name="Bhullar B."/>
            <person name="Murthy T.V.S."/>
            <person name="Zhu C."/>
            <person name="Berger M.F."/>
            <person name="Camargo A.A."/>
            <person name="Kelley F."/>
            <person name="McCarron S."/>
            <person name="Jepson D."/>
            <person name="Richardson A."/>
            <person name="Raphael J."/>
            <person name="Moreira D."/>
            <person name="Taycher E."/>
            <person name="Zuo D."/>
            <person name="Mohr S."/>
            <person name="Kane M.F."/>
            <person name="Williamson J."/>
            <person name="Simpson A.J.G."/>
            <person name="Bulyk M.L."/>
            <person name="Harlow E."/>
            <person name="Marsischky G."/>
            <person name="Kolodner R.D."/>
            <person name="LaBaer J."/>
        </authorList>
    </citation>
    <scope>NUCLEOTIDE SEQUENCE [GENOMIC DNA]</scope>
    <source>
        <strain>ATCC 204508 / S288c</strain>
    </source>
</reference>
<reference key="5">
    <citation type="journal article" date="1977" name="FEBS Lett.">
        <title>Phenylalanyl-tRNA synthetase from baker's yeast. Repeated sequences in the two subunits.</title>
        <authorList>
            <person name="Robbe-Saul S."/>
            <person name="Fasiolo F."/>
            <person name="Boulanger Y."/>
        </authorList>
    </citation>
    <scope>PROTEIN SEQUENCE OF N-TERMINUS</scope>
    <scope>CLEAVAGE OF INITIATOR METHIONINE</scope>
</reference>
<reference key="6">
    <citation type="journal article" date="2003" name="Nature">
        <title>Global analysis of protein expression in yeast.</title>
        <authorList>
            <person name="Ghaemmaghami S."/>
            <person name="Huh W.-K."/>
            <person name="Bower K."/>
            <person name="Howson R.W."/>
            <person name="Belle A."/>
            <person name="Dephoure N."/>
            <person name="O'Shea E.K."/>
            <person name="Weissman J.S."/>
        </authorList>
    </citation>
    <scope>LEVEL OF PROTEIN EXPRESSION [LARGE SCALE ANALYSIS]</scope>
</reference>
<reference key="7">
    <citation type="journal article" date="2008" name="Mol. Cell. Proteomics">
        <title>A multidimensional chromatography technology for in-depth phosphoproteome analysis.</title>
        <authorList>
            <person name="Albuquerque C.P."/>
            <person name="Smolka M.B."/>
            <person name="Payne S.H."/>
            <person name="Bafna V."/>
            <person name="Eng J."/>
            <person name="Zhou H."/>
        </authorList>
    </citation>
    <scope>IDENTIFICATION BY MASS SPECTROMETRY [LARGE SCALE ANALYSIS]</scope>
</reference>
<protein>
    <recommendedName>
        <fullName>Phenylalanine--tRNA ligase beta subunit</fullName>
        <ecNumber>6.1.1.20</ecNumber>
    </recommendedName>
    <alternativeName>
        <fullName>Phenylalanyl-tRNA synthetase beta subunit</fullName>
        <shortName>PheRS</shortName>
    </alternativeName>
</protein>
<feature type="initiator methionine" description="Removed" evidence="5">
    <location>
        <position position="1"/>
    </location>
</feature>
<feature type="chain" id="PRO_0000127023" description="Phenylalanine--tRNA ligase beta subunit">
    <location>
        <begin position="2"/>
        <end position="595"/>
    </location>
</feature>
<feature type="domain" description="B5" evidence="3">
    <location>
        <begin position="292"/>
        <end position="370"/>
    </location>
</feature>
<feature type="region of interest" description="3'-CCA residue in tRNA" evidence="2">
    <location>
        <begin position="86"/>
        <end position="90"/>
    </location>
</feature>
<feature type="binding site" evidence="3">
    <location>
        <position position="348"/>
    </location>
    <ligand>
        <name>Mg(2+)</name>
        <dbReference type="ChEBI" id="CHEBI:18420"/>
        <note>shared with alpha subunit</note>
    </ligand>
</feature>
<feature type="binding site" evidence="3">
    <location>
        <position position="354"/>
    </location>
    <ligand>
        <name>Mg(2+)</name>
        <dbReference type="ChEBI" id="CHEBI:18420"/>
        <note>shared with alpha subunit</note>
    </ligand>
</feature>
<feature type="binding site" evidence="3">
    <location>
        <position position="357"/>
    </location>
    <ligand>
        <name>Mg(2+)</name>
        <dbReference type="ChEBI" id="CHEBI:18420"/>
        <note>shared with alpha subunit</note>
    </ligand>
</feature>
<feature type="binding site" evidence="3">
    <location>
        <position position="358"/>
    </location>
    <ligand>
        <name>Mg(2+)</name>
        <dbReference type="ChEBI" id="CHEBI:18420"/>
        <note>shared with alpha subunit</note>
    </ligand>
</feature>
<feature type="sequence conflict" description="In Ref. 1; AA sequence." evidence="6" ref="1">
    <original>N</original>
    <variation>D</variation>
    <location>
        <position position="18"/>
    </location>
</feature>
<feature type="sequence conflict" description="In Ref. 1; AAA35151." evidence="6" ref="1">
    <original>G</original>
    <variation>D</variation>
    <location>
        <position position="426"/>
    </location>
</feature>
<feature type="sequence conflict" description="In Ref. 4; AAT92797." evidence="6" ref="4">
    <original>F</original>
    <variation>L</variation>
    <location>
        <position position="544"/>
    </location>
</feature>
<sequence>MPTVSVNKQQLFDLLGKNYTSQEFDELCFEFGMEMDEDTTEEALKTGEEPELKLDISANRYDLLCIEGISQSLNEYLERKERPDYKLSKPTTKLIIDKSTEQIRPFATAAVLRNIKLNEKSYASFIALQDKLHANLCRNRSLVAMGTHDLDSIEGPFHYRALPPKDIKFVPLNQTQEFTGDKLIEFYKSPEQKNNIGRYVHIIEDSPVFPVIMDSKDRVCSLPPLINSEHSKISVNTRNILIDITATDKTKAEIVLNILTTMFSRYCDEPFTVEPVEIVSEHNGQSRLAPNFNDRIMDVSIKYINSCLGLDQSADEIAHCLKKMSLHAVQSKEDKDILHVDIPVTRPDILHACDIMEDAAVGYGFNNLPKGEKLSNANFIAKPLPINKVSDIFRVASSQATWVEVLPLTLCSHDENFKFLRQSDNGDLAVKLANPKTLEYQVVRTTLLPGILKTVKENRKHSLPIKVFETGDVVFKDDKLERKAYNERHWAAIYVGKNSGFEIIQGLLGKIMQTFRTEWIADYGAAASGRGYWIEEDDSVKTYFPGRGAKVMFRSKEGAEPKQIGHLGVLHPEVMMNFDVPFAASFVEVNAEVFL</sequence>
<proteinExistence type="evidence at protein level"/>
<accession>P15624</accession>
<accession>D6VY62</accession>
<accession>E9P8X0</accession>
<comment type="catalytic activity">
    <reaction>
        <text>tRNA(Phe) + L-phenylalanine + ATP = L-phenylalanyl-tRNA(Phe) + AMP + diphosphate + H(+)</text>
        <dbReference type="Rhea" id="RHEA:19413"/>
        <dbReference type="Rhea" id="RHEA-COMP:9668"/>
        <dbReference type="Rhea" id="RHEA-COMP:9699"/>
        <dbReference type="ChEBI" id="CHEBI:15378"/>
        <dbReference type="ChEBI" id="CHEBI:30616"/>
        <dbReference type="ChEBI" id="CHEBI:33019"/>
        <dbReference type="ChEBI" id="CHEBI:58095"/>
        <dbReference type="ChEBI" id="CHEBI:78442"/>
        <dbReference type="ChEBI" id="CHEBI:78531"/>
        <dbReference type="ChEBI" id="CHEBI:456215"/>
        <dbReference type="EC" id="6.1.1.20"/>
    </reaction>
</comment>
<comment type="cofactor">
    <cofactor evidence="1">
        <name>Mg(2+)</name>
        <dbReference type="ChEBI" id="CHEBI:18420"/>
    </cofactor>
</comment>
<comment type="subunit">
    <text>Tetramer of two alpha and two beta subunits.</text>
</comment>
<comment type="interaction">
    <interactant intactId="EBI-18684">
        <id>P15624</id>
    </interactant>
    <interactant intactId="EBI-18678">
        <id>P15625</id>
        <label>FRS2</label>
    </interactant>
    <organismsDiffer>false</organismsDiffer>
    <experiments>3</experiments>
</comment>
<comment type="subcellular location">
    <subcellularLocation>
        <location>Cytoplasm</location>
    </subcellularLocation>
</comment>
<comment type="miscellaneous">
    <text evidence="4">Present with 5440 molecules/cell in log phase SD medium.</text>
</comment>
<comment type="similarity">
    <text evidence="6">Belongs to the phenylalanyl-tRNA synthetase beta subunit family. Type 2 subfamily.</text>
</comment>
<comment type="caution">
    <text evidence="7">Was originally erroneously assigned as an alpha subunit.</text>
</comment>
<comment type="sequence caution" evidence="6">
    <conflict type="erroneous initiation">
        <sequence resource="EMBL-CDS" id="AAA35151"/>
    </conflict>
</comment>
<gene>
    <name type="primary">FRS1</name>
    <name type="ordered locus">YLR060W</name>
    <name type="ORF">L2165</name>
</gene>
<evidence type="ECO:0000250" key="1">
    <source>
        <dbReference type="UniProtKB" id="A5K464"/>
    </source>
</evidence>
<evidence type="ECO:0000255" key="2"/>
<evidence type="ECO:0000255" key="3">
    <source>
        <dbReference type="PROSITE-ProRule" id="PRU00816"/>
    </source>
</evidence>
<evidence type="ECO:0000269" key="4">
    <source>
    </source>
</evidence>
<evidence type="ECO:0000269" key="5">
    <source>
    </source>
</evidence>
<evidence type="ECO:0000305" key="6"/>
<evidence type="ECO:0000305" key="7">
    <source>
    </source>
</evidence>
<dbReference type="EC" id="6.1.1.20"/>
<dbReference type="EMBL" id="J03964">
    <property type="protein sequence ID" value="AAA35151.1"/>
    <property type="status" value="ALT_INIT"/>
    <property type="molecule type" value="Genomic_DNA"/>
</dbReference>
<dbReference type="EMBL" id="X94607">
    <property type="protein sequence ID" value="CAA64307.1"/>
    <property type="molecule type" value="Genomic_DNA"/>
</dbReference>
<dbReference type="EMBL" id="Z73232">
    <property type="protein sequence ID" value="CAA97591.1"/>
    <property type="molecule type" value="Genomic_DNA"/>
</dbReference>
<dbReference type="EMBL" id="AY692778">
    <property type="protein sequence ID" value="AAT92797.1"/>
    <property type="molecule type" value="Genomic_DNA"/>
</dbReference>
<dbReference type="EMBL" id="BK006945">
    <property type="protein sequence ID" value="DAA09378.1"/>
    <property type="molecule type" value="Genomic_DNA"/>
</dbReference>
<dbReference type="PIR" id="S61634">
    <property type="entry name" value="YFBYBC"/>
</dbReference>
<dbReference type="RefSeq" id="NP_013161.1">
    <property type="nucleotide sequence ID" value="NM_001181947.1"/>
</dbReference>
<dbReference type="SMR" id="P15624"/>
<dbReference type="BioGRID" id="31335">
    <property type="interactions" value="245"/>
</dbReference>
<dbReference type="ComplexPortal" id="CPX-1738">
    <property type="entry name" value="Phenylalanyl-tRNA synthetase complex"/>
</dbReference>
<dbReference type="DIP" id="DIP-6746N"/>
<dbReference type="FunCoup" id="P15624">
    <property type="interactions" value="1332"/>
</dbReference>
<dbReference type="IntAct" id="P15624">
    <property type="interactions" value="8"/>
</dbReference>
<dbReference type="MINT" id="P15624"/>
<dbReference type="STRING" id="4932.YLR060W"/>
<dbReference type="CarbonylDB" id="P15624"/>
<dbReference type="iPTMnet" id="P15624"/>
<dbReference type="PaxDb" id="4932-YLR060W"/>
<dbReference type="PeptideAtlas" id="P15624"/>
<dbReference type="EnsemblFungi" id="YLR060W_mRNA">
    <property type="protein sequence ID" value="YLR060W"/>
    <property type="gene ID" value="YLR060W"/>
</dbReference>
<dbReference type="GeneID" id="850749"/>
<dbReference type="KEGG" id="sce:YLR060W"/>
<dbReference type="AGR" id="SGD:S000004050"/>
<dbReference type="SGD" id="S000004050">
    <property type="gene designation" value="FRS1"/>
</dbReference>
<dbReference type="VEuPathDB" id="FungiDB:YLR060W"/>
<dbReference type="eggNOG" id="KOG2472">
    <property type="taxonomic scope" value="Eukaryota"/>
</dbReference>
<dbReference type="GeneTree" id="ENSGT00530000063489"/>
<dbReference type="HOGENOM" id="CLU_020279_2_0_1"/>
<dbReference type="InParanoid" id="P15624"/>
<dbReference type="OMA" id="FPGRCAN"/>
<dbReference type="OrthoDB" id="1698572at2759"/>
<dbReference type="BioCyc" id="YEAST:G3O-32214-MONOMER"/>
<dbReference type="BioGRID-ORCS" id="850749">
    <property type="hits" value="3 hits in 10 CRISPR screens"/>
</dbReference>
<dbReference type="PRO" id="PR:P15624"/>
<dbReference type="Proteomes" id="UP000002311">
    <property type="component" value="Chromosome XII"/>
</dbReference>
<dbReference type="RNAct" id="P15624">
    <property type="molecule type" value="protein"/>
</dbReference>
<dbReference type="GO" id="GO:0005737">
    <property type="term" value="C:cytoplasm"/>
    <property type="evidence" value="ECO:0007005"/>
    <property type="project" value="SGD"/>
</dbReference>
<dbReference type="GO" id="GO:0009328">
    <property type="term" value="C:phenylalanine-tRNA ligase complex"/>
    <property type="evidence" value="ECO:0000314"/>
    <property type="project" value="ComplexPortal"/>
</dbReference>
<dbReference type="GO" id="GO:0005524">
    <property type="term" value="F:ATP binding"/>
    <property type="evidence" value="ECO:0007669"/>
    <property type="project" value="UniProtKB-KW"/>
</dbReference>
<dbReference type="GO" id="GO:0000287">
    <property type="term" value="F:magnesium ion binding"/>
    <property type="evidence" value="ECO:0000250"/>
    <property type="project" value="UniProtKB"/>
</dbReference>
<dbReference type="GO" id="GO:0004826">
    <property type="term" value="F:phenylalanine-tRNA ligase activity"/>
    <property type="evidence" value="ECO:0007669"/>
    <property type="project" value="UniProtKB-EC"/>
</dbReference>
<dbReference type="GO" id="GO:1990825">
    <property type="term" value="F:sequence-specific mRNA binding"/>
    <property type="evidence" value="ECO:0000314"/>
    <property type="project" value="SGD"/>
</dbReference>
<dbReference type="GO" id="GO:0006432">
    <property type="term" value="P:phenylalanyl-tRNA aminoacylation"/>
    <property type="evidence" value="ECO:0000314"/>
    <property type="project" value="SGD"/>
</dbReference>
<dbReference type="CDD" id="cd00769">
    <property type="entry name" value="PheRS_beta_core"/>
    <property type="match status" value="1"/>
</dbReference>
<dbReference type="FunFam" id="3.50.40.10:FF:000002">
    <property type="entry name" value="phenylalanine--tRNA ligase beta subunit"/>
    <property type="match status" value="1"/>
</dbReference>
<dbReference type="FunFam" id="3.30.56.10:FF:000006">
    <property type="entry name" value="Phenylalanyl-tRNA synthetase subunit beta"/>
    <property type="match status" value="1"/>
</dbReference>
<dbReference type="FunFam" id="3.30.56.10:FF:000004">
    <property type="entry name" value="Phenylalanyl-tRNA synthetase, beta subunit"/>
    <property type="match status" value="1"/>
</dbReference>
<dbReference type="FunFam" id="3.30.930.10:FF:000052">
    <property type="entry name" value="Phenylalanyl-tRNA synthetase, beta subunit"/>
    <property type="match status" value="1"/>
</dbReference>
<dbReference type="Gene3D" id="3.30.56.10">
    <property type="match status" value="2"/>
</dbReference>
<dbReference type="Gene3D" id="3.30.930.10">
    <property type="entry name" value="Bira Bifunctional Protein, Domain 2"/>
    <property type="match status" value="1"/>
</dbReference>
<dbReference type="Gene3D" id="3.50.40.10">
    <property type="entry name" value="Phenylalanyl-trna Synthetase, Chain B, domain 3"/>
    <property type="match status" value="1"/>
</dbReference>
<dbReference type="InterPro" id="IPR045864">
    <property type="entry name" value="aa-tRNA-synth_II/BPL/LPL"/>
</dbReference>
<dbReference type="InterPro" id="IPR005146">
    <property type="entry name" value="B3/B4_tRNA-bd"/>
</dbReference>
<dbReference type="InterPro" id="IPR009061">
    <property type="entry name" value="DNA-bd_dom_put_sf"/>
</dbReference>
<dbReference type="InterPro" id="IPR045060">
    <property type="entry name" value="Phe-tRNA-ligase_IIc_bsu"/>
</dbReference>
<dbReference type="InterPro" id="IPR004531">
    <property type="entry name" value="Phe-tRNA-synth_IIc_bsu_arc_euk"/>
</dbReference>
<dbReference type="InterPro" id="IPR020825">
    <property type="entry name" value="Phe-tRNA_synthase-like_B3/B4"/>
</dbReference>
<dbReference type="InterPro" id="IPR041616">
    <property type="entry name" value="PheRS_beta_core"/>
</dbReference>
<dbReference type="InterPro" id="IPR040659">
    <property type="entry name" value="PhetRS_B1"/>
</dbReference>
<dbReference type="InterPro" id="IPR005147">
    <property type="entry name" value="tRNA_synthase_B5-dom"/>
</dbReference>
<dbReference type="NCBIfam" id="TIGR00471">
    <property type="entry name" value="pheT_arch"/>
    <property type="match status" value="1"/>
</dbReference>
<dbReference type="PANTHER" id="PTHR10947:SF0">
    <property type="entry name" value="PHENYLALANINE--TRNA LIGASE BETA SUBUNIT"/>
    <property type="match status" value="1"/>
</dbReference>
<dbReference type="PANTHER" id="PTHR10947">
    <property type="entry name" value="PHENYLALANYL-TRNA SYNTHETASE BETA CHAIN AND LEUCINE-RICH REPEAT-CONTAINING PROTEIN 47"/>
    <property type="match status" value="1"/>
</dbReference>
<dbReference type="Pfam" id="PF03483">
    <property type="entry name" value="B3_4"/>
    <property type="match status" value="1"/>
</dbReference>
<dbReference type="Pfam" id="PF03484">
    <property type="entry name" value="B5"/>
    <property type="match status" value="1"/>
</dbReference>
<dbReference type="Pfam" id="PF18262">
    <property type="entry name" value="PhetRS_B1"/>
    <property type="match status" value="1"/>
</dbReference>
<dbReference type="Pfam" id="PF17759">
    <property type="entry name" value="tRNA_synthFbeta"/>
    <property type="match status" value="1"/>
</dbReference>
<dbReference type="SMART" id="SM00873">
    <property type="entry name" value="B3_4"/>
    <property type="match status" value="1"/>
</dbReference>
<dbReference type="SMART" id="SM00874">
    <property type="entry name" value="B5"/>
    <property type="match status" value="1"/>
</dbReference>
<dbReference type="SUPFAM" id="SSF55681">
    <property type="entry name" value="Class II aaRS and biotin synthetases"/>
    <property type="match status" value="1"/>
</dbReference>
<dbReference type="SUPFAM" id="SSF46955">
    <property type="entry name" value="Putative DNA-binding domain"/>
    <property type="match status" value="2"/>
</dbReference>
<dbReference type="PROSITE" id="PS51483">
    <property type="entry name" value="B5"/>
    <property type="match status" value="1"/>
</dbReference>
<name>SYFB_YEAST</name>
<organism>
    <name type="scientific">Saccharomyces cerevisiae (strain ATCC 204508 / S288c)</name>
    <name type="common">Baker's yeast</name>
    <dbReference type="NCBI Taxonomy" id="559292"/>
    <lineage>
        <taxon>Eukaryota</taxon>
        <taxon>Fungi</taxon>
        <taxon>Dikarya</taxon>
        <taxon>Ascomycota</taxon>
        <taxon>Saccharomycotina</taxon>
        <taxon>Saccharomycetes</taxon>
        <taxon>Saccharomycetales</taxon>
        <taxon>Saccharomycetaceae</taxon>
        <taxon>Saccharomyces</taxon>
    </lineage>
</organism>
<keyword id="KW-0030">Aminoacyl-tRNA synthetase</keyword>
<keyword id="KW-0067">ATP-binding</keyword>
<keyword id="KW-0963">Cytoplasm</keyword>
<keyword id="KW-0903">Direct protein sequencing</keyword>
<keyword id="KW-0436">Ligase</keyword>
<keyword id="KW-0460">Magnesium</keyword>
<keyword id="KW-0479">Metal-binding</keyword>
<keyword id="KW-0547">Nucleotide-binding</keyword>
<keyword id="KW-0648">Protein biosynthesis</keyword>
<keyword id="KW-1185">Reference proteome</keyword>